<feature type="chain" id="PRO_0000369869" description="RNA-directed RNA polymerase">
    <location>
        <begin position="1"/>
        <end position="1090"/>
    </location>
</feature>
<feature type="domain" description="RdRp catalytic" evidence="2">
    <location>
        <begin position="506"/>
        <end position="678"/>
    </location>
</feature>
<keyword id="KW-0460">Magnesium</keyword>
<keyword id="KW-0547">Nucleotide-binding</keyword>
<keyword id="KW-0548">Nucleotidyltransferase</keyword>
<keyword id="KW-1185">Reference proteome</keyword>
<keyword id="KW-0694">RNA-binding</keyword>
<keyword id="KW-0696">RNA-directed RNA polymerase</keyword>
<keyword id="KW-0808">Transferase</keyword>
<keyword id="KW-0693">Viral RNA replication</keyword>
<keyword id="KW-0946">Virion</keyword>
<accession>Q91E95</accession>
<dbReference type="EC" id="2.7.7.48"/>
<dbReference type="EMBL" id="AJ304859">
    <property type="protein sequence ID" value="CAC44891.1"/>
    <property type="molecule type" value="Genomic_RNA"/>
</dbReference>
<dbReference type="RefSeq" id="YP_392464.1">
    <property type="nucleotide sequence ID" value="NC_007547.1"/>
</dbReference>
<dbReference type="SMR" id="Q91E95"/>
<dbReference type="GeneID" id="3773137"/>
<dbReference type="KEGG" id="vg:3773137"/>
<dbReference type="Proteomes" id="UP000007664">
    <property type="component" value="Genome"/>
</dbReference>
<dbReference type="GO" id="GO:0044423">
    <property type="term" value="C:virion component"/>
    <property type="evidence" value="ECO:0007669"/>
    <property type="project" value="UniProtKB-KW"/>
</dbReference>
<dbReference type="GO" id="GO:0000166">
    <property type="term" value="F:nucleotide binding"/>
    <property type="evidence" value="ECO:0007669"/>
    <property type="project" value="UniProtKB-KW"/>
</dbReference>
<dbReference type="GO" id="GO:0003723">
    <property type="term" value="F:RNA binding"/>
    <property type="evidence" value="ECO:0007669"/>
    <property type="project" value="UniProtKB-KW"/>
</dbReference>
<dbReference type="GO" id="GO:0003968">
    <property type="term" value="F:RNA-directed RNA polymerase activity"/>
    <property type="evidence" value="ECO:0007669"/>
    <property type="project" value="UniProtKB-KW"/>
</dbReference>
<dbReference type="GO" id="GO:0006351">
    <property type="term" value="P:DNA-templated transcription"/>
    <property type="evidence" value="ECO:0007669"/>
    <property type="project" value="InterPro"/>
</dbReference>
<dbReference type="GO" id="GO:0019079">
    <property type="term" value="P:viral genome replication"/>
    <property type="evidence" value="ECO:0007669"/>
    <property type="project" value="InterPro"/>
</dbReference>
<dbReference type="Gene3D" id="1.10.357.80">
    <property type="match status" value="2"/>
</dbReference>
<dbReference type="Gene3D" id="1.20.120.1390">
    <property type="match status" value="1"/>
</dbReference>
<dbReference type="Gene3D" id="1.20.120.1400">
    <property type="match status" value="1"/>
</dbReference>
<dbReference type="Gene3D" id="3.30.70.2480">
    <property type="match status" value="1"/>
</dbReference>
<dbReference type="Gene3D" id="1.10.10.1990">
    <property type="entry name" value="Viral RNA-directed RNA polymerase, 4-helical domain"/>
    <property type="match status" value="1"/>
</dbReference>
<dbReference type="InterPro" id="IPR043502">
    <property type="entry name" value="DNA/RNA_pol_sf"/>
</dbReference>
<dbReference type="InterPro" id="IPR042032">
    <property type="entry name" value="RNA-dir_pol_4-hel_dom"/>
</dbReference>
<dbReference type="InterPro" id="IPR001795">
    <property type="entry name" value="RNA-dir_pol_luteovirus"/>
</dbReference>
<dbReference type="InterPro" id="IPR007097">
    <property type="entry name" value="RNA-dir_pol_reovirus"/>
</dbReference>
<dbReference type="InterPro" id="IPR022071">
    <property type="entry name" value="Rotavirus_VP1_C"/>
</dbReference>
<dbReference type="Pfam" id="PF02123">
    <property type="entry name" value="RdRP_4"/>
    <property type="match status" value="1"/>
</dbReference>
<dbReference type="Pfam" id="PF12289">
    <property type="entry name" value="Rotavirus_VP1"/>
    <property type="match status" value="1"/>
</dbReference>
<dbReference type="SUPFAM" id="SSF56672">
    <property type="entry name" value="DNA/RNA polymerases"/>
    <property type="match status" value="1"/>
</dbReference>
<dbReference type="PROSITE" id="PS50523">
    <property type="entry name" value="RDRP_DSRNA_REO"/>
    <property type="match status" value="1"/>
</dbReference>
<reference key="1">
    <citation type="journal article" date="2002" name="Virus Res.">
        <title>Human group C rotavirus: completion of the genome sequence and gene coding assignments of a non-cultivatable rotavirus.</title>
        <authorList>
            <person name="Chen Z."/>
            <person name="Lambden P.R."/>
            <person name="Lau J."/>
            <person name="Caul E.O."/>
            <person name="Clarke I.N."/>
        </authorList>
    </citation>
    <scope>NUCLEOTIDE SEQUENCE [GENOMIC RNA]</scope>
</reference>
<name>RDRP_ROTHC</name>
<organism>
    <name type="scientific">Rotavirus C (isolate RVC/Human/United Kingdom/Bristol/1989)</name>
    <name type="common">RV-C</name>
    <dbReference type="NCBI Taxonomy" id="31567"/>
    <lineage>
        <taxon>Viruses</taxon>
        <taxon>Riboviria</taxon>
        <taxon>Orthornavirae</taxon>
        <taxon>Duplornaviricota</taxon>
        <taxon>Resentoviricetes</taxon>
        <taxon>Reovirales</taxon>
        <taxon>Sedoreoviridae</taxon>
        <taxon>Rotavirus</taxon>
        <taxon>Rotavirus C</taxon>
    </lineage>
</organism>
<sequence length="1090" mass="125802">MAQSIVVDGDYDALASRYLKFVYDFENVTYQNNYFATDKFKKDIEQYLKSIHDGEKITQSKIDEKEKILLDRVPAEERCLISKLVFAYGKHGNVENKLVKYGVKDALSHAPQKDAKPYENNIITSEIFKEKSEYTDIYMDPSINTSCQSNCQAMMFTISEMKLNNIKNAARLEKLFTIIAATINKYGMPRHNTRYRYEWETMKNKPYHLAAWINSSIEMIACVVDHHTYMIARELIVKSFTNRTSLAKLVSSPMTVLTAMLPIRGTFITTENLELEYSNKSINYLISKEMAEDFMQAIKQLRDEGLEYIPDYYEKWFKSPDPLTFPNIALIYSFSFHVGYRKQALSDAVYDQITVTYSDNVNMEMYKEYSERIENEIFTILKDKIIHEDKRLEEYELSALLSMSSASNGILREINFGGQKVRSTKKNMHVIDDIYHKKYTTDIPPVDARNPIPLGRRDVPGRRTRAIFILPYQYFIAQHSFAEIMLNYAKREREYSEFYSQANQVLSYGDVTRYLDSNSILCFTDVSQWDASQHNTKVLRRSIIRAMKRLKQLTHNINIHKAINIYIQSQENLENSYVLIDKKAIQYGATASGEKQTKIMNSIANKALIQTVLGKLMTDYTFDVKMIRVDGDDNYAIVRFPIAITEKLLSEFTSKLRSYYSEMNVKVKALASLTGCEIAKRYVAGGMLFFRAGVNILHHEKRNQDSAYDMAATLYANYIVNALRGLTMSRTFILTKICQMTSIKITGTLRLFPMKSILALNSAFKVFDEVDYVINYPISNLFIQLQRKLSSIKAKSKIADNIAKSPQFKSYVELLNKSLTTDENPIVSDGIRLTEKAKLNSYAPIALEKRRDQFSIMVSFLQNPTTFKSETVVTINDVLYFISGFIKIDSSTVLPKEENNTMPLLPAIIKRTLSYFGLRTHDYDIKGSSSTVSKIIKQYSVYTPGIEELYEIVNKSVDTIRGYFASFNVPKADVDTYISTQMYKHDRFKILQAYIYNLLSVNYGMYQLVDLNSARFFDHVIHTPMAKTPTAVFMIDLALRLKIINHCIEKGEIITVSVHANKTDYLKLWRMLWNVKTMNSPYSKNSMFDE</sequence>
<organismHost>
    <name type="scientific">Homo sapiens</name>
    <name type="common">Human</name>
    <dbReference type="NCBI Taxonomy" id="9606"/>
</organismHost>
<evidence type="ECO:0000250" key="1"/>
<evidence type="ECO:0000255" key="2">
    <source>
        <dbReference type="PROSITE-ProRule" id="PRU00539"/>
    </source>
</evidence>
<evidence type="ECO:0000305" key="3"/>
<proteinExistence type="inferred from homology"/>
<comment type="function">
    <text evidence="2">RNA-directed RNA polymerase that is involved in both transcription and genome replication. Together with VP3 capping enzyme, forms an enzyme complex positioned near the channels situated at each of the five-fold vertices of the core. Following infection, the outermost layer of the virus is lost, leaving a double-layered particle (DLP) made up of the core and VP6 shell. VP1 then catalyzes the transcription of fully conservative plus-strand genomic RNAs that are extruded through the DLP's channels into the cytoplasm where they function as mRNAs for translation of viral proteins. One copy of each of the viral (+)RNAs is also recruited during core assembly, together with newly synthesized polymerase complexes and VP2. The polymerase of these novo-formed particles catalyzes the synthesis of complementary minus-strands leading to dsDNA formation. To do so, the polymerase specifically recognizes conserved 3' sequence(s) in plus-strand RNA templates. Once dsRNA synthesis is complete, the polymerase switches to the transcriptional mode, thus providing secondary transcription (By similarity).</text>
</comment>
<comment type="catalytic activity">
    <reaction evidence="2">
        <text>RNA(n) + a ribonucleoside 5'-triphosphate = RNA(n+1) + diphosphate</text>
        <dbReference type="Rhea" id="RHEA:21248"/>
        <dbReference type="Rhea" id="RHEA-COMP:14527"/>
        <dbReference type="Rhea" id="RHEA-COMP:17342"/>
        <dbReference type="ChEBI" id="CHEBI:33019"/>
        <dbReference type="ChEBI" id="CHEBI:61557"/>
        <dbReference type="ChEBI" id="CHEBI:140395"/>
        <dbReference type="EC" id="2.7.7.48"/>
    </reaction>
</comment>
<comment type="cofactor">
    <cofactor evidence="3">
        <name>Mg(2+)</name>
        <dbReference type="ChEBI" id="CHEBI:18420"/>
    </cofactor>
</comment>
<comment type="subunit">
    <text evidence="1 3">Interacts with VP3 (Potential). Interacts with VP2; this interaction activates VP1. Interacts with NSP5; this interaction is probably necessary for the formation of functional virus factories. Interacts with NSP2; this interaction is weak (By similarity).</text>
</comment>
<comment type="subcellular location">
    <subcellularLocation>
        <location evidence="3">Virion</location>
    </subcellularLocation>
    <text evidence="1">Attached inside the inner capsid as a minor component. Also found in spherical cytoplasmic structures, called virus factories, that appear early after infection and are the site of viral replication and packaging (By similarity).</text>
</comment>
<comment type="similarity">
    <text evidence="3">Belongs to the reoviridae RNA-directed RNA polymerase family.</text>
</comment>
<protein>
    <recommendedName>
        <fullName>RNA-directed RNA polymerase</fullName>
        <ecNumber>2.7.7.48</ecNumber>
    </recommendedName>
    <alternativeName>
        <fullName>Protein VP1</fullName>
    </alternativeName>
</protein>